<proteinExistence type="inferred from homology"/>
<keyword id="KW-0963">Cytoplasm</keyword>
<keyword id="KW-0489">Methyltransferase</keyword>
<keyword id="KW-0694">RNA-binding</keyword>
<keyword id="KW-0698">rRNA processing</keyword>
<keyword id="KW-0949">S-adenosyl-L-methionine</keyword>
<keyword id="KW-0808">Transferase</keyword>
<evidence type="ECO:0000255" key="1">
    <source>
        <dbReference type="HAMAP-Rule" id="MF_00607"/>
    </source>
</evidence>
<accession>Q9JVC2</accession>
<accession>A1IQV0</accession>
<sequence>MKEHKARKRFGQNFLQDTRIISDIVNAVRPQADDVVIEIGPGLAAITEPLAKKLNRLHVVEIDRDIVCRLKTLPFADKLVIHEGDVLQFDFNGIAGKKKIVGNLPYNISTPLLFKLAEVADDVVDMHFMLQKEVVDRMVAAPKSNDYGRLGVMLQYFFDMEMLIDVPPESFDPAPKVDSAVVRMIPVKHRIGKADDFEHFAKLVKLAFHQRRKTIRNNLKELAGDDDLQAVGINPQDRAEHIAPEKYVALSNYLAGKAV</sequence>
<reference key="1">
    <citation type="journal article" date="2000" name="Nature">
        <title>Complete DNA sequence of a serogroup A strain of Neisseria meningitidis Z2491.</title>
        <authorList>
            <person name="Parkhill J."/>
            <person name="Achtman M."/>
            <person name="James K.D."/>
            <person name="Bentley S.D."/>
            <person name="Churcher C.M."/>
            <person name="Klee S.R."/>
            <person name="Morelli G."/>
            <person name="Basham D."/>
            <person name="Brown D."/>
            <person name="Chillingworth T."/>
            <person name="Davies R.M."/>
            <person name="Davis P."/>
            <person name="Devlin K."/>
            <person name="Feltwell T."/>
            <person name="Hamlin N."/>
            <person name="Holroyd S."/>
            <person name="Jagels K."/>
            <person name="Leather S."/>
            <person name="Moule S."/>
            <person name="Mungall K.L."/>
            <person name="Quail M.A."/>
            <person name="Rajandream M.A."/>
            <person name="Rutherford K.M."/>
            <person name="Simmonds M."/>
            <person name="Skelton J."/>
            <person name="Whitehead S."/>
            <person name="Spratt B.G."/>
            <person name="Barrell B.G."/>
        </authorList>
    </citation>
    <scope>NUCLEOTIDE SEQUENCE [LARGE SCALE GENOMIC DNA]</scope>
    <source>
        <strain>DSM 15465 / Z2491</strain>
    </source>
</reference>
<gene>
    <name evidence="1" type="primary">rsmA</name>
    <name evidence="1" type="synonym">ksgA</name>
    <name type="ordered locus">NMA0902</name>
</gene>
<feature type="chain" id="PRO_0000101571" description="Ribosomal RNA small subunit methyltransferase A">
    <location>
        <begin position="1"/>
        <end position="259"/>
    </location>
</feature>
<feature type="binding site" evidence="1">
    <location>
        <position position="13"/>
    </location>
    <ligand>
        <name>S-adenosyl-L-methionine</name>
        <dbReference type="ChEBI" id="CHEBI:59789"/>
    </ligand>
</feature>
<feature type="binding site" evidence="1">
    <location>
        <position position="15"/>
    </location>
    <ligand>
        <name>S-adenosyl-L-methionine</name>
        <dbReference type="ChEBI" id="CHEBI:59789"/>
    </ligand>
</feature>
<feature type="binding site" evidence="1">
    <location>
        <position position="40"/>
    </location>
    <ligand>
        <name>S-adenosyl-L-methionine</name>
        <dbReference type="ChEBI" id="CHEBI:59789"/>
    </ligand>
</feature>
<feature type="binding site" evidence="1">
    <location>
        <position position="61"/>
    </location>
    <ligand>
        <name>S-adenosyl-L-methionine</name>
        <dbReference type="ChEBI" id="CHEBI:59789"/>
    </ligand>
</feature>
<feature type="binding site" evidence="1">
    <location>
        <position position="85"/>
    </location>
    <ligand>
        <name>S-adenosyl-L-methionine</name>
        <dbReference type="ChEBI" id="CHEBI:59789"/>
    </ligand>
</feature>
<feature type="binding site" evidence="1">
    <location>
        <position position="103"/>
    </location>
    <ligand>
        <name>S-adenosyl-L-methionine</name>
        <dbReference type="ChEBI" id="CHEBI:59789"/>
    </ligand>
</feature>
<organism>
    <name type="scientific">Neisseria meningitidis serogroup A / serotype 4A (strain DSM 15465 / Z2491)</name>
    <dbReference type="NCBI Taxonomy" id="122587"/>
    <lineage>
        <taxon>Bacteria</taxon>
        <taxon>Pseudomonadati</taxon>
        <taxon>Pseudomonadota</taxon>
        <taxon>Betaproteobacteria</taxon>
        <taxon>Neisseriales</taxon>
        <taxon>Neisseriaceae</taxon>
        <taxon>Neisseria</taxon>
    </lineage>
</organism>
<protein>
    <recommendedName>
        <fullName evidence="1">Ribosomal RNA small subunit methyltransferase A</fullName>
        <ecNumber evidence="1">2.1.1.182</ecNumber>
    </recommendedName>
    <alternativeName>
        <fullName evidence="1">16S rRNA (adenine(1518)-N(6)/adenine(1519)-N(6))-dimethyltransferase</fullName>
    </alternativeName>
    <alternativeName>
        <fullName evidence="1">16S rRNA dimethyladenosine transferase</fullName>
    </alternativeName>
    <alternativeName>
        <fullName evidence="1">16S rRNA dimethylase</fullName>
    </alternativeName>
    <alternativeName>
        <fullName evidence="1">S-adenosylmethionine-6-N', N'-adenosyl(rRNA) dimethyltransferase</fullName>
    </alternativeName>
</protein>
<comment type="function">
    <text evidence="1">Specifically dimethylates two adjacent adenosines (A1518 and A1519) in the loop of a conserved hairpin near the 3'-end of 16S rRNA in the 30S particle. May play a critical role in biogenesis of 30S subunits.</text>
</comment>
<comment type="catalytic activity">
    <reaction evidence="1">
        <text>adenosine(1518)/adenosine(1519) in 16S rRNA + 4 S-adenosyl-L-methionine = N(6)-dimethyladenosine(1518)/N(6)-dimethyladenosine(1519) in 16S rRNA + 4 S-adenosyl-L-homocysteine + 4 H(+)</text>
        <dbReference type="Rhea" id="RHEA:19609"/>
        <dbReference type="Rhea" id="RHEA-COMP:10232"/>
        <dbReference type="Rhea" id="RHEA-COMP:10233"/>
        <dbReference type="ChEBI" id="CHEBI:15378"/>
        <dbReference type="ChEBI" id="CHEBI:57856"/>
        <dbReference type="ChEBI" id="CHEBI:59789"/>
        <dbReference type="ChEBI" id="CHEBI:74411"/>
        <dbReference type="ChEBI" id="CHEBI:74493"/>
        <dbReference type="EC" id="2.1.1.182"/>
    </reaction>
</comment>
<comment type="subcellular location">
    <subcellularLocation>
        <location evidence="1">Cytoplasm</location>
    </subcellularLocation>
</comment>
<comment type="similarity">
    <text evidence="1">Belongs to the class I-like SAM-binding methyltransferase superfamily. rRNA adenine N(6)-methyltransferase family. RsmA subfamily.</text>
</comment>
<name>RSMA_NEIMA</name>
<dbReference type="EC" id="2.1.1.182" evidence="1"/>
<dbReference type="EMBL" id="AL157959">
    <property type="protein sequence ID" value="CAM08134.1"/>
    <property type="molecule type" value="Genomic_DNA"/>
</dbReference>
<dbReference type="PIR" id="F81936">
    <property type="entry name" value="F81936"/>
</dbReference>
<dbReference type="RefSeq" id="WP_002229195.1">
    <property type="nucleotide sequence ID" value="NC_003116.1"/>
</dbReference>
<dbReference type="SMR" id="Q9JVC2"/>
<dbReference type="EnsemblBacteria" id="CAM08134">
    <property type="protein sequence ID" value="CAM08134"/>
    <property type="gene ID" value="NMA0902"/>
</dbReference>
<dbReference type="GeneID" id="93386477"/>
<dbReference type="KEGG" id="nma:NMA0902"/>
<dbReference type="HOGENOM" id="CLU_041220_0_1_4"/>
<dbReference type="Proteomes" id="UP000000626">
    <property type="component" value="Chromosome"/>
</dbReference>
<dbReference type="GO" id="GO:0005829">
    <property type="term" value="C:cytosol"/>
    <property type="evidence" value="ECO:0007669"/>
    <property type="project" value="TreeGrafter"/>
</dbReference>
<dbReference type="GO" id="GO:0052908">
    <property type="term" value="F:16S rRNA (adenine(1518)-N(6)/adenine(1519)-N(6))-dimethyltransferase activity"/>
    <property type="evidence" value="ECO:0007669"/>
    <property type="project" value="UniProtKB-EC"/>
</dbReference>
<dbReference type="GO" id="GO:0003723">
    <property type="term" value="F:RNA binding"/>
    <property type="evidence" value="ECO:0007669"/>
    <property type="project" value="UniProtKB-KW"/>
</dbReference>
<dbReference type="FunFam" id="1.10.8.100:FF:000001">
    <property type="entry name" value="Ribosomal RNA small subunit methyltransferase A"/>
    <property type="match status" value="1"/>
</dbReference>
<dbReference type="FunFam" id="3.40.50.150:FF:000006">
    <property type="entry name" value="Ribosomal RNA small subunit methyltransferase A"/>
    <property type="match status" value="1"/>
</dbReference>
<dbReference type="Gene3D" id="1.10.8.100">
    <property type="entry name" value="Ribosomal RNA adenine dimethylase-like, domain 2"/>
    <property type="match status" value="1"/>
</dbReference>
<dbReference type="Gene3D" id="3.40.50.150">
    <property type="entry name" value="Vaccinia Virus protein VP39"/>
    <property type="match status" value="1"/>
</dbReference>
<dbReference type="HAMAP" id="MF_00607">
    <property type="entry name" value="16SrRNA_methyltr_A"/>
    <property type="match status" value="1"/>
</dbReference>
<dbReference type="InterPro" id="IPR001737">
    <property type="entry name" value="KsgA/Erm"/>
</dbReference>
<dbReference type="InterPro" id="IPR023165">
    <property type="entry name" value="rRNA_Ade_diMease-like_C"/>
</dbReference>
<dbReference type="InterPro" id="IPR020596">
    <property type="entry name" value="rRNA_Ade_Mease_Trfase_CS"/>
</dbReference>
<dbReference type="InterPro" id="IPR020598">
    <property type="entry name" value="rRNA_Ade_methylase_Trfase_N"/>
</dbReference>
<dbReference type="InterPro" id="IPR011530">
    <property type="entry name" value="rRNA_adenine_dimethylase"/>
</dbReference>
<dbReference type="InterPro" id="IPR029063">
    <property type="entry name" value="SAM-dependent_MTases_sf"/>
</dbReference>
<dbReference type="NCBIfam" id="TIGR00755">
    <property type="entry name" value="ksgA"/>
    <property type="match status" value="1"/>
</dbReference>
<dbReference type="PANTHER" id="PTHR11727">
    <property type="entry name" value="DIMETHYLADENOSINE TRANSFERASE"/>
    <property type="match status" value="1"/>
</dbReference>
<dbReference type="PANTHER" id="PTHR11727:SF7">
    <property type="entry name" value="DIMETHYLADENOSINE TRANSFERASE-RELATED"/>
    <property type="match status" value="1"/>
</dbReference>
<dbReference type="Pfam" id="PF00398">
    <property type="entry name" value="RrnaAD"/>
    <property type="match status" value="1"/>
</dbReference>
<dbReference type="SMART" id="SM00650">
    <property type="entry name" value="rADc"/>
    <property type="match status" value="1"/>
</dbReference>
<dbReference type="SUPFAM" id="SSF53335">
    <property type="entry name" value="S-adenosyl-L-methionine-dependent methyltransferases"/>
    <property type="match status" value="1"/>
</dbReference>
<dbReference type="PROSITE" id="PS01131">
    <property type="entry name" value="RRNA_A_DIMETH"/>
    <property type="match status" value="1"/>
</dbReference>
<dbReference type="PROSITE" id="PS51689">
    <property type="entry name" value="SAM_RNA_A_N6_MT"/>
    <property type="match status" value="1"/>
</dbReference>